<protein>
    <recommendedName>
        <fullName evidence="1">Ribosome hibernation promotion factor</fullName>
        <shortName evidence="1">HPF</shortName>
    </recommendedName>
    <alternativeName>
        <fullName evidence="4">Dark-response protein 21</fullName>
        <shortName evidence="4">DRP-21</shortName>
    </alternativeName>
    <alternativeName>
        <fullName evidence="4">Light-repressed protein A</fullName>
    </alternativeName>
</protein>
<accession>P47908</accession>
<accession>B1XMT6</accession>
<gene>
    <name evidence="1" type="primary">hpf</name>
    <name evidence="4" type="synonym">lrtA</name>
    <name type="ordered locus">SYNPCC7002_A0263</name>
</gene>
<feature type="chain" id="PRO_0000208587" description="Ribosome hibernation promotion factor">
    <location>
        <begin position="1"/>
        <end position="193"/>
    </location>
</feature>
<feature type="sequence conflict" description="In Ref. 1; AAA62586." evidence="5" ref="1">
    <original>LIGDRAPELP</original>
    <variation>SLRSRPRAS</variation>
    <location>
        <begin position="122"/>
        <end position="131"/>
    </location>
</feature>
<feature type="sequence conflict" description="In Ref. 1; AAA62586." evidence="5" ref="1">
    <original>E</original>
    <variation>Q</variation>
    <location>
        <position position="149"/>
    </location>
</feature>
<evidence type="ECO:0000255" key="1">
    <source>
        <dbReference type="HAMAP-Rule" id="MF_00839"/>
    </source>
</evidence>
<evidence type="ECO:0000269" key="2">
    <source>
    </source>
</evidence>
<evidence type="ECO:0000269" key="3">
    <source>
    </source>
</evidence>
<evidence type="ECO:0000303" key="4">
    <source>
    </source>
</evidence>
<evidence type="ECO:0000305" key="5"/>
<evidence type="ECO:0000305" key="6">
    <source>
    </source>
</evidence>
<sequence length="193" mass="21911">MKLLIQGNNIAVTESIHDYVESKLEKATKHFQTFATKVDVHLSVANNARITDKHKAEVTVYANGTVIRAQEGSENLYASIDLVSDKIARQLRKYKEKNFGKKTHVQEKTSEVLPEDPVPDNLIGDRAPELPSEVVRMKYFAMPPMTIDEALEQLQLVDHDFYMFLNKDTNAINVIYIRNHGGYGVIQPRLGKE</sequence>
<proteinExistence type="evidence at transcript level"/>
<comment type="function">
    <text evidence="6">Might modulate either transcription and/or translation.</text>
</comment>
<comment type="function">
    <text evidence="1">Required for dimerization of active 70S ribosomes into 100S ribosomes in stationary phase; 100S ribosomes are translationally inactive and sometimes present during exponential growth.</text>
</comment>
<comment type="subunit">
    <text evidence="1">Interacts with 100S ribosomes.</text>
</comment>
<comment type="subcellular location">
    <subcellularLocation>
        <location evidence="1">Cytoplasm</location>
    </subcellularLocation>
</comment>
<comment type="induction">
    <text evidence="2 3">Is repressed by light, since the transcript is synthesized in the dark, but upon 20 minutes of illumination, transcript levels fall below detectable limits. This light-repressed transcript is present only in dark-adapted cells. Is rapidly translated at the onset of illumination; in fact, is one of the first proteins to be synthesized upon illumination of dark-adapted cells. Repression of the transcript in the light requires protein synthesis, which suggests that a specific protein is directly involved in lrtA light repression.</text>
</comment>
<comment type="disruption phenotype">
    <text evidence="2">Knockout mutants grown in continuous light appear to be the same as wild-type, showing no differences in growth or photosynthetic activity.</text>
</comment>
<comment type="miscellaneous">
    <text>The transcript for lrtA is more stable in the dark than in the light: a 3-hour half-life is estimated in the dark, whereas a 4-minute half-life is observed in the light.</text>
</comment>
<comment type="similarity">
    <text evidence="1">Belongs to the HPF/YfiA ribosome-associated protein family. Long HPF subfamily.</text>
</comment>
<organism>
    <name type="scientific">Picosynechococcus sp. (strain ATCC 27264 / PCC 7002 / PR-6)</name>
    <name type="common">Agmenellum quadruplicatum</name>
    <dbReference type="NCBI Taxonomy" id="32049"/>
    <lineage>
        <taxon>Bacteria</taxon>
        <taxon>Bacillati</taxon>
        <taxon>Cyanobacteriota</taxon>
        <taxon>Cyanophyceae</taxon>
        <taxon>Oscillatoriophycideae</taxon>
        <taxon>Chroococcales</taxon>
        <taxon>Geminocystaceae</taxon>
        <taxon>Picosynechococcus</taxon>
    </lineage>
</organism>
<reference key="1">
    <citation type="journal article" date="1994" name="J. Biol. Chem.">
        <title>A light-repressed transcript found in Synechococcus PCC 7002 is similar to a chloroplast-specific small subunit ribosomal protein and to a transcription modulator protein associated with sigma 54.</title>
        <authorList>
            <person name="Tan X."/>
            <person name="Varughese M."/>
            <person name="Widger W.R."/>
        </authorList>
    </citation>
    <scope>NUCLEOTIDE SEQUENCE [GENOMIC DNA]</scope>
    <scope>INDUCTION</scope>
    <scope>DISRUPTION PHENOTYPE</scope>
    <source>
        <strain>ATCC 27264 / PCC 7002 / PR-6</strain>
    </source>
</reference>
<reference key="2">
    <citation type="submission" date="2008-02" db="EMBL/GenBank/DDBJ databases">
        <title>Complete sequence of Synechococcus sp. PCC 7002.</title>
        <authorList>
            <person name="Li T."/>
            <person name="Zhao J."/>
            <person name="Zhao C."/>
            <person name="Liu Z."/>
            <person name="Zhao F."/>
            <person name="Marquardt J."/>
            <person name="Nomura C.T."/>
            <person name="Persson S."/>
            <person name="Detter J.C."/>
            <person name="Richardson P.M."/>
            <person name="Lanz C."/>
            <person name="Schuster S.C."/>
            <person name="Wang J."/>
            <person name="Li S."/>
            <person name="Huang X."/>
            <person name="Cai T."/>
            <person name="Yu Z."/>
            <person name="Luo J."/>
            <person name="Zhao J."/>
            <person name="Bryant D.A."/>
        </authorList>
    </citation>
    <scope>NUCLEOTIDE SEQUENCE [LARGE SCALE GENOMIC DNA]</scope>
    <source>
        <strain>ATCC 27264 / PCC 7002 / PR-6</strain>
    </source>
</reference>
<reference key="3">
    <citation type="journal article" date="1998" name="Plant Physiol.">
        <title>Transcriptional and posttranscriptional control of mRNA from lrtA, a light-repressed transcript in Synechococcus sp. PCC 7002.</title>
        <authorList>
            <person name="Samartzidou H."/>
            <person name="Widger W.R."/>
        </authorList>
    </citation>
    <scope>INDUCTION</scope>
    <scope>PUTATIVE FUNCTION</scope>
    <source>
        <strain>ATCC 27264 / PCC 7002 / PR-6</strain>
    </source>
</reference>
<name>HPF_PICP2</name>
<keyword id="KW-0963">Cytoplasm</keyword>
<keyword id="KW-1185">Reference proteome</keyword>
<keyword id="KW-0810">Translation regulation</keyword>
<dbReference type="EMBL" id="L29194">
    <property type="protein sequence ID" value="AAA62586.1"/>
    <property type="molecule type" value="Genomic_DNA"/>
</dbReference>
<dbReference type="EMBL" id="CP000951">
    <property type="protein sequence ID" value="ACA98273.1"/>
    <property type="molecule type" value="Genomic_DNA"/>
</dbReference>
<dbReference type="PIR" id="A53914">
    <property type="entry name" value="A53914"/>
</dbReference>
<dbReference type="RefSeq" id="WP_012305897.1">
    <property type="nucleotide sequence ID" value="NZ_JAHHPU010000004.1"/>
</dbReference>
<dbReference type="SMR" id="P47908"/>
<dbReference type="STRING" id="32049.SYNPCC7002_A0263"/>
<dbReference type="KEGG" id="syp:SYNPCC7002_A0263"/>
<dbReference type="eggNOG" id="COG1544">
    <property type="taxonomic scope" value="Bacteria"/>
</dbReference>
<dbReference type="HOGENOM" id="CLU_071472_0_2_3"/>
<dbReference type="Proteomes" id="UP000001688">
    <property type="component" value="Chromosome"/>
</dbReference>
<dbReference type="GO" id="GO:0022627">
    <property type="term" value="C:cytosolic small ribosomal subunit"/>
    <property type="evidence" value="ECO:0007669"/>
    <property type="project" value="TreeGrafter"/>
</dbReference>
<dbReference type="GO" id="GO:0043024">
    <property type="term" value="F:ribosomal small subunit binding"/>
    <property type="evidence" value="ECO:0007669"/>
    <property type="project" value="TreeGrafter"/>
</dbReference>
<dbReference type="GO" id="GO:0045900">
    <property type="term" value="P:negative regulation of translational elongation"/>
    <property type="evidence" value="ECO:0007669"/>
    <property type="project" value="TreeGrafter"/>
</dbReference>
<dbReference type="CDD" id="cd00552">
    <property type="entry name" value="RaiA"/>
    <property type="match status" value="1"/>
</dbReference>
<dbReference type="FunFam" id="3.30.160.100:FF:000001">
    <property type="entry name" value="Ribosome hibernation promoting factor"/>
    <property type="match status" value="1"/>
</dbReference>
<dbReference type="Gene3D" id="3.30.160.100">
    <property type="entry name" value="Ribosome hibernation promotion factor-like"/>
    <property type="match status" value="1"/>
</dbReference>
<dbReference type="Gene3D" id="3.30.505.50">
    <property type="entry name" value="Sigma 54 modulation/S30EA ribosomal protein, C-terminal domain"/>
    <property type="match status" value="1"/>
</dbReference>
<dbReference type="HAMAP" id="MF_00839">
    <property type="entry name" value="HPF"/>
    <property type="match status" value="1"/>
</dbReference>
<dbReference type="InterPro" id="IPR050574">
    <property type="entry name" value="HPF/YfiA_ribosome-assoc"/>
</dbReference>
<dbReference type="InterPro" id="IPR034694">
    <property type="entry name" value="HPF_long/plastid"/>
</dbReference>
<dbReference type="InterPro" id="IPR036567">
    <property type="entry name" value="RHF-like"/>
</dbReference>
<dbReference type="InterPro" id="IPR003489">
    <property type="entry name" value="RHF/RaiA"/>
</dbReference>
<dbReference type="InterPro" id="IPR032528">
    <property type="entry name" value="Ribosom_S30AE_C"/>
</dbReference>
<dbReference type="InterPro" id="IPR038416">
    <property type="entry name" value="Ribosom_S30AE_C_sf"/>
</dbReference>
<dbReference type="NCBIfam" id="TIGR00741">
    <property type="entry name" value="yfiA"/>
    <property type="match status" value="1"/>
</dbReference>
<dbReference type="PANTHER" id="PTHR33231">
    <property type="entry name" value="30S RIBOSOMAL PROTEIN"/>
    <property type="match status" value="1"/>
</dbReference>
<dbReference type="PANTHER" id="PTHR33231:SF1">
    <property type="entry name" value="30S RIBOSOMAL PROTEIN"/>
    <property type="match status" value="1"/>
</dbReference>
<dbReference type="Pfam" id="PF16321">
    <property type="entry name" value="Ribosom_S30AE_C"/>
    <property type="match status" value="1"/>
</dbReference>
<dbReference type="Pfam" id="PF02482">
    <property type="entry name" value="Ribosomal_S30AE"/>
    <property type="match status" value="1"/>
</dbReference>
<dbReference type="SUPFAM" id="SSF69754">
    <property type="entry name" value="Ribosome binding protein Y (YfiA homologue)"/>
    <property type="match status" value="1"/>
</dbReference>